<organism>
    <name type="scientific">Anaeromyxobacter dehalogenans (strain 2CP-1 / ATCC BAA-258)</name>
    <dbReference type="NCBI Taxonomy" id="455488"/>
    <lineage>
        <taxon>Bacteria</taxon>
        <taxon>Pseudomonadati</taxon>
        <taxon>Myxococcota</taxon>
        <taxon>Myxococcia</taxon>
        <taxon>Myxococcales</taxon>
        <taxon>Cystobacterineae</taxon>
        <taxon>Anaeromyxobacteraceae</taxon>
        <taxon>Anaeromyxobacter</taxon>
    </lineage>
</organism>
<dbReference type="EC" id="2.7.4.6" evidence="1"/>
<dbReference type="EMBL" id="CP001359">
    <property type="protein sequence ID" value="ACL65657.1"/>
    <property type="molecule type" value="Genomic_DNA"/>
</dbReference>
<dbReference type="RefSeq" id="WP_012633491.1">
    <property type="nucleotide sequence ID" value="NC_011891.1"/>
</dbReference>
<dbReference type="SMR" id="B8JAD8"/>
<dbReference type="KEGG" id="acp:A2cp1_2319"/>
<dbReference type="HOGENOM" id="CLU_060216_8_1_7"/>
<dbReference type="Proteomes" id="UP000007089">
    <property type="component" value="Chromosome"/>
</dbReference>
<dbReference type="GO" id="GO:0005737">
    <property type="term" value="C:cytoplasm"/>
    <property type="evidence" value="ECO:0007669"/>
    <property type="project" value="UniProtKB-SubCell"/>
</dbReference>
<dbReference type="GO" id="GO:0005524">
    <property type="term" value="F:ATP binding"/>
    <property type="evidence" value="ECO:0007669"/>
    <property type="project" value="UniProtKB-UniRule"/>
</dbReference>
<dbReference type="GO" id="GO:0046872">
    <property type="term" value="F:metal ion binding"/>
    <property type="evidence" value="ECO:0007669"/>
    <property type="project" value="UniProtKB-KW"/>
</dbReference>
<dbReference type="GO" id="GO:0004550">
    <property type="term" value="F:nucleoside diphosphate kinase activity"/>
    <property type="evidence" value="ECO:0007669"/>
    <property type="project" value="UniProtKB-UniRule"/>
</dbReference>
<dbReference type="GO" id="GO:0006241">
    <property type="term" value="P:CTP biosynthetic process"/>
    <property type="evidence" value="ECO:0007669"/>
    <property type="project" value="UniProtKB-UniRule"/>
</dbReference>
<dbReference type="GO" id="GO:0006183">
    <property type="term" value="P:GTP biosynthetic process"/>
    <property type="evidence" value="ECO:0007669"/>
    <property type="project" value="UniProtKB-UniRule"/>
</dbReference>
<dbReference type="GO" id="GO:0006228">
    <property type="term" value="P:UTP biosynthetic process"/>
    <property type="evidence" value="ECO:0007669"/>
    <property type="project" value="UniProtKB-UniRule"/>
</dbReference>
<dbReference type="CDD" id="cd04413">
    <property type="entry name" value="NDPk_I"/>
    <property type="match status" value="1"/>
</dbReference>
<dbReference type="FunFam" id="3.30.70.141:FF:000001">
    <property type="entry name" value="Nucleoside diphosphate kinase"/>
    <property type="match status" value="1"/>
</dbReference>
<dbReference type="Gene3D" id="3.30.70.141">
    <property type="entry name" value="Nucleoside diphosphate kinase-like domain"/>
    <property type="match status" value="1"/>
</dbReference>
<dbReference type="HAMAP" id="MF_00451">
    <property type="entry name" value="NDP_kinase"/>
    <property type="match status" value="1"/>
</dbReference>
<dbReference type="InterPro" id="IPR034907">
    <property type="entry name" value="NDK-like_dom"/>
</dbReference>
<dbReference type="InterPro" id="IPR036850">
    <property type="entry name" value="NDK-like_dom_sf"/>
</dbReference>
<dbReference type="InterPro" id="IPR001564">
    <property type="entry name" value="Nucleoside_diP_kinase"/>
</dbReference>
<dbReference type="InterPro" id="IPR023005">
    <property type="entry name" value="Nucleoside_diP_kinase_AS"/>
</dbReference>
<dbReference type="NCBIfam" id="NF001908">
    <property type="entry name" value="PRK00668.1"/>
    <property type="match status" value="1"/>
</dbReference>
<dbReference type="PANTHER" id="PTHR11349">
    <property type="entry name" value="NUCLEOSIDE DIPHOSPHATE KINASE"/>
    <property type="match status" value="1"/>
</dbReference>
<dbReference type="Pfam" id="PF00334">
    <property type="entry name" value="NDK"/>
    <property type="match status" value="1"/>
</dbReference>
<dbReference type="PRINTS" id="PR01243">
    <property type="entry name" value="NUCDPKINASE"/>
</dbReference>
<dbReference type="SMART" id="SM00562">
    <property type="entry name" value="NDK"/>
    <property type="match status" value="1"/>
</dbReference>
<dbReference type="SUPFAM" id="SSF54919">
    <property type="entry name" value="Nucleoside diphosphate kinase, NDK"/>
    <property type="match status" value="1"/>
</dbReference>
<dbReference type="PROSITE" id="PS00469">
    <property type="entry name" value="NDPK"/>
    <property type="match status" value="1"/>
</dbReference>
<dbReference type="PROSITE" id="PS51374">
    <property type="entry name" value="NDPK_LIKE"/>
    <property type="match status" value="1"/>
</dbReference>
<accession>B8JAD8</accession>
<comment type="function">
    <text evidence="1">Major role in the synthesis of nucleoside triphosphates other than ATP. The ATP gamma phosphate is transferred to the NDP beta phosphate via a ping-pong mechanism, using a phosphorylated active-site intermediate.</text>
</comment>
<comment type="catalytic activity">
    <reaction evidence="1">
        <text>a 2'-deoxyribonucleoside 5'-diphosphate + ATP = a 2'-deoxyribonucleoside 5'-triphosphate + ADP</text>
        <dbReference type="Rhea" id="RHEA:44640"/>
        <dbReference type="ChEBI" id="CHEBI:30616"/>
        <dbReference type="ChEBI" id="CHEBI:61560"/>
        <dbReference type="ChEBI" id="CHEBI:73316"/>
        <dbReference type="ChEBI" id="CHEBI:456216"/>
        <dbReference type="EC" id="2.7.4.6"/>
    </reaction>
</comment>
<comment type="catalytic activity">
    <reaction evidence="1">
        <text>a ribonucleoside 5'-diphosphate + ATP = a ribonucleoside 5'-triphosphate + ADP</text>
        <dbReference type="Rhea" id="RHEA:18113"/>
        <dbReference type="ChEBI" id="CHEBI:30616"/>
        <dbReference type="ChEBI" id="CHEBI:57930"/>
        <dbReference type="ChEBI" id="CHEBI:61557"/>
        <dbReference type="ChEBI" id="CHEBI:456216"/>
        <dbReference type="EC" id="2.7.4.6"/>
    </reaction>
</comment>
<comment type="cofactor">
    <cofactor evidence="1">
        <name>Mg(2+)</name>
        <dbReference type="ChEBI" id="CHEBI:18420"/>
    </cofactor>
</comment>
<comment type="subunit">
    <text evidence="1">Homotetramer.</text>
</comment>
<comment type="subcellular location">
    <subcellularLocation>
        <location evidence="1">Cytoplasm</location>
    </subcellularLocation>
</comment>
<comment type="similarity">
    <text evidence="1">Belongs to the NDK family.</text>
</comment>
<proteinExistence type="inferred from homology"/>
<name>NDK_ANAD2</name>
<keyword id="KW-0067">ATP-binding</keyword>
<keyword id="KW-0963">Cytoplasm</keyword>
<keyword id="KW-0418">Kinase</keyword>
<keyword id="KW-0460">Magnesium</keyword>
<keyword id="KW-0479">Metal-binding</keyword>
<keyword id="KW-0546">Nucleotide metabolism</keyword>
<keyword id="KW-0547">Nucleotide-binding</keyword>
<keyword id="KW-0597">Phosphoprotein</keyword>
<keyword id="KW-0808">Transferase</keyword>
<evidence type="ECO:0000255" key="1">
    <source>
        <dbReference type="HAMAP-Rule" id="MF_00451"/>
    </source>
</evidence>
<sequence length="147" mass="16265">MAIERTLSIIKPDGVEKGIIGKIIGRFEEKGLKPVAIRLTQLSKAEAEGFYAVHKARPFFGDLVKFMTSGPVVLMVLEGENAVARNREIMGATDPKKADAGTIRKDFATDIEKNTVHGSDSVENAKIEVSYFFPEVQVHAYEWKKLA</sequence>
<protein>
    <recommendedName>
        <fullName evidence="1">Nucleoside diphosphate kinase</fullName>
        <shortName evidence="1">NDK</shortName>
        <shortName evidence="1">NDP kinase</shortName>
        <ecNumber evidence="1">2.7.4.6</ecNumber>
    </recommendedName>
    <alternativeName>
        <fullName evidence="1">Nucleoside-2-P kinase</fullName>
    </alternativeName>
</protein>
<reference key="1">
    <citation type="submission" date="2009-01" db="EMBL/GenBank/DDBJ databases">
        <title>Complete sequence of Anaeromyxobacter dehalogenans 2CP-1.</title>
        <authorList>
            <person name="Lucas S."/>
            <person name="Copeland A."/>
            <person name="Lapidus A."/>
            <person name="Glavina del Rio T."/>
            <person name="Dalin E."/>
            <person name="Tice H."/>
            <person name="Bruce D."/>
            <person name="Goodwin L."/>
            <person name="Pitluck S."/>
            <person name="Saunders E."/>
            <person name="Brettin T."/>
            <person name="Detter J.C."/>
            <person name="Han C."/>
            <person name="Larimer F."/>
            <person name="Land M."/>
            <person name="Hauser L."/>
            <person name="Kyrpides N."/>
            <person name="Ovchinnikova G."/>
            <person name="Beliaev A.S."/>
            <person name="Richardson P."/>
        </authorList>
    </citation>
    <scope>NUCLEOTIDE SEQUENCE [LARGE SCALE GENOMIC DNA]</scope>
    <source>
        <strain>2CP-1 / ATCC BAA-258</strain>
    </source>
</reference>
<feature type="chain" id="PRO_1000135239" description="Nucleoside diphosphate kinase">
    <location>
        <begin position="1"/>
        <end position="147"/>
    </location>
</feature>
<feature type="active site" description="Pros-phosphohistidine intermediate" evidence="1">
    <location>
        <position position="117"/>
    </location>
</feature>
<feature type="binding site" evidence="1">
    <location>
        <position position="11"/>
    </location>
    <ligand>
        <name>ATP</name>
        <dbReference type="ChEBI" id="CHEBI:30616"/>
    </ligand>
</feature>
<feature type="binding site" evidence="1">
    <location>
        <position position="59"/>
    </location>
    <ligand>
        <name>ATP</name>
        <dbReference type="ChEBI" id="CHEBI:30616"/>
    </ligand>
</feature>
<feature type="binding site" evidence="1">
    <location>
        <position position="87"/>
    </location>
    <ligand>
        <name>ATP</name>
        <dbReference type="ChEBI" id="CHEBI:30616"/>
    </ligand>
</feature>
<feature type="binding site" evidence="1">
    <location>
        <position position="93"/>
    </location>
    <ligand>
        <name>ATP</name>
        <dbReference type="ChEBI" id="CHEBI:30616"/>
    </ligand>
</feature>
<feature type="binding site" evidence="1">
    <location>
        <position position="104"/>
    </location>
    <ligand>
        <name>ATP</name>
        <dbReference type="ChEBI" id="CHEBI:30616"/>
    </ligand>
</feature>
<feature type="binding site" evidence="1">
    <location>
        <position position="114"/>
    </location>
    <ligand>
        <name>ATP</name>
        <dbReference type="ChEBI" id="CHEBI:30616"/>
    </ligand>
</feature>
<gene>
    <name evidence="1" type="primary">ndk</name>
    <name type="ordered locus">A2cp1_2319</name>
</gene>